<protein>
    <recommendedName>
        <fullName evidence="12">Transcription factor sma-9</fullName>
    </recommendedName>
</protein>
<comment type="function">
    <text evidence="4 5 6 7 9 10 11">Transcription factor, probably acting as a transcriptional activator and repressor, involved in the TGF-beta-like dbl-1 signaling pathway (PubMed:14627718, PubMed:17397820, PubMed:20687916). Plays a role in regulation of body size, and patterning of male-specific genital sensilla (simple sense organs), known as rays, and mating-associated structures, spicules (PubMed:14627718). Required for the dorsoventral patterning of the postembryonic mesodermal lineage (M lineage), acting by antagonizing the TGF-beta-like dbl-1 signaling pathway, in part by repressing expression of transcription factor unc-130 (PubMed:16790477, PubMed:18036582, PubMed:29155044). Involved in egg-laying, perhaps via modulation of cholinergic neurotransmission (PubMed:25407930). Involved in production of reactive oxygen species (ROS), acting downstream of the dbl-1 signaling pathway (PubMed:20687916). Plays a role in the mitochondrial unfolded protein response (mtUPR) (PubMed:20687916). May play a role in modulating lifespan and in responses to proteotoxic stress (PubMed:25407930).</text>
</comment>
<comment type="function">
    <molecule>Isoform h</molecule>
    <text evidence="6 8">Transcription factor, probably acting as a transcriptional activator (PubMed:17397820). Required for patterning of male-specific genital sensilla (simple sense organs), known as rays (PubMed:20565799). Dispensable for regulation of body size (PubMed:20565799).</text>
</comment>
<comment type="subcellular location">
    <subcellularLocation>
        <location evidence="4">Nucleus</location>
    </subcellularLocation>
</comment>
<comment type="alternative products">
    <event type="alternative splicing"/>
    <isoform>
        <id>Q7JM44-1</id>
        <name evidence="18">d</name>
        <sequence type="displayed"/>
    </isoform>
    <isoform>
        <id>Q7JM44-4</id>
        <name evidence="15">a</name>
        <sequence type="described" ref="VSP_061084"/>
    </isoform>
    <isoform>
        <id>Q7JM44-10</id>
        <name evidence="16">b</name>
        <sequence type="described" ref="VSP_061083 VSP_061085 VSP_061086 VSP_061087"/>
    </isoform>
    <isoform>
        <id>Q7JM44-3</id>
        <name evidence="17">c</name>
        <sequence type="described" ref="VSP_061082"/>
    </isoform>
    <isoform>
        <id>Q7JM44-2</id>
        <name evidence="19">e</name>
        <sequence type="described" ref="VSP_061093"/>
    </isoform>
    <isoform>
        <id>Q7JM44-6</id>
        <name evidence="20">f</name>
        <sequence type="described" ref="VSP_061091"/>
    </isoform>
    <isoform>
        <id>Q7JM44-7</id>
        <name evidence="21">g</name>
        <sequence type="described" ref="VSP_061090 VSP_061095"/>
    </isoform>
    <isoform>
        <id>Q7JM44-11</id>
        <name evidence="22">h</name>
        <sequence type="described" ref="VSP_061081 VSP_061092 VSP_061094"/>
    </isoform>
    <isoform>
        <id>Q7JM44-8</id>
        <name evidence="23">i</name>
        <sequence type="described" ref="VSP_061085 VSP_061090 VSP_061095"/>
    </isoform>
    <isoform>
        <id>Q7JM44-9</id>
        <name evidence="24">j</name>
        <sequence type="described" ref="VSP_061085 VSP_061088 VSP_061089"/>
    </isoform>
    <isoform>
        <id>Q7JM44-5</id>
        <name evidence="25">m</name>
        <sequence type="described" ref="VSP_061083 VSP_061084 VSP_061093"/>
    </isoform>
</comment>
<comment type="tissue specificity">
    <text evidence="4">Expressed in the ventral nerve cord (VNC), pharynx, intestine and seam cells (at protein level).</text>
</comment>
<comment type="developmental stage">
    <text evidence="4">Expressed from larval stage L1 to adult stages but not during embryonic development.</text>
</comment>
<comment type="developmental stage">
    <molecule>Isoform h</molecule>
    <text evidence="8">Expressed at larval L1 and L3 stages and in adulthood.</text>
</comment>
<comment type="induction">
    <text evidence="9">Induced by exposure to nano-polystyrene particles.</text>
</comment>
<comment type="disruption phenotype">
    <text evidence="9 10">RNAi-mediated knockdown causes a reduction in acetylcholine (ACh) content, altered sensitivity to Aldicarb, a potent acetylcholinesterase (AChE) inhibitor, reduced expression of vesicular acetylcholine transporter unc-17 and elevated levels of reactive oxygen species (PubMed:25407930). Knockdown inhibits nuclear localization of transcription factor daf-16 (PubMed:25407930). In response to nano-polystyrene, causes decreased locomotion behavior and increased reactive oxygen species (ROS) production (PubMed:20687916). Intestine-specific RNAi-mediated knockdown causes increased ROS production and reduces expression of elt-2 and hsp-6 (PubMed:20687916). Represses the mitochondrial unfolded protein response (mtUPR) induced by exposure to nano-polystyrene (PubMed:20687916).</text>
</comment>
<gene>
    <name evidence="18" type="primary">sma-9</name>
    <name evidence="18" type="ORF">T05A10.1</name>
</gene>
<accession>Q7JM44</accession>
<accession>A0A5T0BWQ3</accession>
<accession>A0A5T0C5A1</accession>
<accession>A0A679M2I6</accession>
<accession>B5U8M3</accession>
<accession>G5ED62</accession>
<accession>Q22190</accession>
<accession>Q7JM42</accession>
<accession>Q7JM43</accession>
<accession>Q7JM45</accession>
<accession>Q7JM48</accession>
<reference evidence="13" key="1">
    <citation type="journal article" date="2003" name="Development">
        <title>The Caenorhabditis elegans schnurri homolog sma-9 mediates stage- and cell type-specific responses to DBL-1 BMP-related signaling.</title>
        <authorList>
            <person name="Liang J."/>
            <person name="Lints R."/>
            <person name="Foehr M.L."/>
            <person name="Tokarz R."/>
            <person name="Yu L."/>
            <person name="Emmons S.W."/>
            <person name="Liu J."/>
            <person name="Savage-Dunn C."/>
        </authorList>
    </citation>
    <scope>NUCLEOTIDE SEQUENCE [MRNA] (ISOFORM H)</scope>
    <scope>FUNCTION</scope>
    <scope>SUBCELLULAR LOCATION</scope>
    <scope>DEVELOPMENTAL STAGE</scope>
    <scope>MUTAGENESIS OF 1235-ARG--ASN-2242</scope>
    <source>
        <strain evidence="13">Bristol N2</strain>
    </source>
</reference>
<reference evidence="14" key="2">
    <citation type="journal article" date="1998" name="Science">
        <title>Genome sequence of the nematode C. elegans: a platform for investigating biology.</title>
        <authorList>
            <consortium name="The C. elegans sequencing consortium"/>
        </authorList>
    </citation>
    <scope>NUCLEOTIDE SEQUENCE [LARGE SCALE GENOMIC DNA]</scope>
    <source>
        <strain evidence="14">Bristol N2</strain>
    </source>
</reference>
<reference evidence="12" key="3">
    <citation type="journal article" date="2006" name="Development">
        <title>An antagonistic role for the C. elegans Schnurri homolog SMA-9 in modulating TGFbeta signaling during mesodermal patterning.</title>
        <authorList>
            <person name="Foehr M.L."/>
            <person name="Lindy A.S."/>
            <person name="Fairbank R.C."/>
            <person name="Amin N.M."/>
            <person name="Xu M."/>
            <person name="Yanowitz J."/>
            <person name="Fire A.Z."/>
            <person name="Liu J."/>
        </authorList>
    </citation>
    <scope>FUNCTION</scope>
    <scope>MUTAGENESIS OF 55-GLN--ASN-2242 AND 2226-GLN--ASN-2242</scope>
</reference>
<reference evidence="12" key="4">
    <citation type="journal article" date="2007" name="Dev. Biol.">
        <title>Transcriptional repressor and activator activities of SMA-9 contribute differentially to BMP-related signaling outputs.</title>
        <authorList>
            <person name="Liang J."/>
            <person name="Yu L."/>
            <person name="Yin J."/>
            <person name="Savage-Dunn C."/>
        </authorList>
    </citation>
    <scope>FUNCTION</scope>
</reference>
<reference evidence="12" key="5">
    <citation type="journal article" date="2008" name="Dev. Biol.">
        <title>Dorsoventral patterning of the C. elegans postembryonic mesoderm requires both LIN-12/Notch and TGFbeta signaling.</title>
        <authorList>
            <person name="Foehr M.L."/>
            <person name="Liu J."/>
        </authorList>
    </citation>
    <scope>FUNCTION</scope>
    <scope>MUTAGENESIS OF 2226-GLN--ASN-2242</scope>
</reference>
<reference key="6">
    <citation type="journal article" date="2010" name="BMC Dev. Biol.">
        <title>mab-31 and the TGF-beta pathway act in the ray lineage to pattern C. elegans male sensory rays.</title>
        <authorList>
            <person name="Wong Y.F."/>
            <person name="Sheng Q."/>
            <person name="Chung J.W."/>
            <person name="Chan J.K."/>
            <person name="Chow K.L."/>
        </authorList>
    </citation>
    <scope>FUNCTION</scope>
    <scope>INDUCTION</scope>
    <scope>DISRUPTION PHENOTYPE</scope>
</reference>
<reference evidence="12" key="7">
    <citation type="journal article" date="2010" name="BMC Mol. Biol.">
        <title>Alternative trans-splicing of Caenorhabditis elegans sma-9/schnurri generates a short transcript that provides tissue-specific function in BMP signaling.</title>
        <authorList>
            <person name="Yin J."/>
            <person name="Yu L."/>
            <person name="Savage-Dunn C."/>
        </authorList>
    </citation>
    <scope>FUNCTION (ISOFORM H)</scope>
    <scope>DEVELOPMENTAL STAGE (ISOFORM H)</scope>
</reference>
<reference evidence="12" key="8">
    <citation type="journal article" date="2016" name="Mol. Neurobiol.">
        <title>SMAD Transcription Factor, Sma-9, Attunes TGF-beta Signaling Cascade Towards Modulating Amyloid Beta Aggregation and Associated Outcome in Transgenic C. elegans.</title>
        <authorList>
            <person name="Haque R."/>
            <person name="Nazir A."/>
        </authorList>
    </citation>
    <scope>FUNCTION</scope>
    <scope>DISRUPTION PHENOTYPE</scope>
</reference>
<reference evidence="12" key="9">
    <citation type="journal article" date="2018" name="Dev. Biol.">
        <title>The forkhead transcription factor UNC-130/FOXD integrates both BMP and Notch signaling to regulate dorsoventral patterning of the C. elegans postembryonic mesoderm.</title>
        <authorList>
            <person name="Shen Q."/>
            <person name="Toulabi L.B."/>
            <person name="Shi H."/>
            <person name="Nicklow E.E."/>
            <person name="Liu J."/>
        </authorList>
    </citation>
    <scope>FUNCTION</scope>
    <scope>MUTAGENESIS OF 2226-GLN--ASN-2242</scope>
</reference>
<sequence length="2242" mass="249950">MSHQAIGISNNFQQVQREQLNHQRLLQAQLQTNGPGSVSQQQQASQQQQQVQHVQQQQQSQQQQQQVASQQNQPQLQMNAQILQALSTPQGQNLVNMLLMQQALNAQQTDTQNPQQIMQHQLAQQQAQQAQQAQQAQQARQQAEQQAQAQARHQAEQQAQQQAQQQAQARQQEQQAQLAAIQQQVTPQQFAQILHMQQQLQQQQFQQQQLQQQQLQQQQLQQQQLQQQQLQQQQLQQVLQISQAQQQAQQAQHVQSRQMQPSQQSQVQAQLQQQQQLQQQQAQQLSQQQAQQQQQLQQLQLQQFLQQQQQLHQQRAAAQQAQAQNNASQQRPSVASTPALSSTPQLNDLTQTMQAQLQQQLLLQQQQAQAQQAQQAQQAQLAQQAQQQQQGQSQNRTVSQALQYIQSMQLQQRADGTPNAESQEERLAQMLNEQQQRMLQNQAREAQHRQLLISSTPAPRGGITMGTPIGIARREEQPVPSTVAVTTAPAAVRTPVAVPPMKQNSNPSMNPSSTSTSASATSSHQILAPSLSKPLEQPSSSKAASSGNESMSDHISRIISENEVILQGDPVIRKKRPYHRQIGAQSSVDHDSNSGGSTRTSPGPKDSRMLQAASRSQSLFELSGSKHFMGSLTSGQPLLRPIQAHNDPNYTPECIYCKLTFPNEAGLQAHEVVCGKKKELEKAQIAQEGNPHSALKRRHTHQDATLAMHSPLAAHTPSNMPGPSEPAIKLKKDDSTELDGTSKPDALQSSSSFPRSLPKEWEQHMLTLQNLAAIIPPFVQAFLAKVLQTKLTMVSSGTLTHIYENYNISPICVKQFLHFASQLTDQQLEEMTVESEKQYLENAEEYQAKGIIQALPCDNLEVTEMLKQQETIMKGQVPDLLVSTQAVLHHCSGKRDNKDPSKNFVMIKLLHANGKDITEIPMKAETDLDECNARFVYQMREFQKINNMNDRLIEVLKTDPAAAATPLFQVAREQSASVKFLIRQTGMVHLTIVASVAKRLGMSSMQQDVPESNQIPNGIIAFDGVQIKQEPEDPPGDDDDDDDDCIIEVVDEDQKQHIAMLTAAASGQDIGIGGQFQKVTQNLEPAIVNQQSIVNHGDSIVNNASIPIANNAPVQIVQNGGPMQHEVVAMPVQLKLEDLRLEPQTSGDTDKPYWLVINGDIGGRPSFMTTAGMTSRTHRTRNITSETYVTVPRQQPMFAVQDGTLSMYAKWNVPVHNDAETKMNLSFMGMVSLRRRTGQQKFFKYTTANKDQGHYRMTHSSFWDISTKIRDRQASMSEEKTPEESVDYDAQFIERLVGGTYTNTDLQGPSNAPVTIPVLVAPEDSTSAEPSTSGQSLLMRSPRPQSPPLRDIKMDLSDDDYSATDLATTCKLEPKQESFEDVKDVKRENSPDARPTVIISDDAGRIRRERFANKYISRIRPKHDQIIGGHRTDEVYVYVRGRGRGRYICDRCGIRCKKPSMLKKHIKSHTDVRAFNCTACNFSFKTKGNLTKHLSSKTHQRRISNIQAGNDSDGTTPSTSSMMNMDDGYHRNQPLFDDYDNNSSDEEDYDHLNRMQAEHKFKFGQEHILFERTAHTPPTRWCLVEAQNDHYWPSPDRRSCMSAPPVAMQRDFDDRAMTPVSGANSPYLSQQVHSPMSTSSQSNIILDIPNNQKSNCSSVSNVSPSNSQNFQSLSTVPTCASSSSNVLVPNVNFLQKDETLKCDQCDRTFRKISDLTLHQHTHNIEMQQSKNRMYQCSECKIPIRTKAQLQKHLERNHGVHMDESVTACIDPLASTQSVLGGPSTSNPRSFMCVDCDIGFRKHGILAKHLRSKTHVMKLESLQRLPVDTLSLITKKDNGACLNDIDTTDCEKARISLLAIVEKLRNEADKDEQGSVVPTTSIPAPQPVALTPEMIRALANAQTPVTASMTNTPSTAQFPVGVVSTPSVSAVSASGSQSNVSCVSSFNNSTMSPNPTVVPQVFPTPNPSSPLESSSMQFRKKAVLDSATHANDMPRTILRISEIPSSLPVNHQLHRDLSFLAHTTSRSESSITSPIVSSSTNFSYRKRSESSLSGSSPTHTKKLMVWNPPLAEPSFYSPKAALHPLSTDKAHASESLSDRLHNKRPRPIPDNTKCQICADEFSTPIELQVHLHVDHVRMMDGAEYKCPRKFCGLNYESLDSLRAHVTAHYETDRQKLLEEKVLLAEADFPIDNSKIEKLNSPKKESMNKFTTPFKAISDHHELYAQTQQGAGSSTSNQSPKAAN</sequence>
<name>SMA9_CAEEL</name>
<proteinExistence type="evidence at protein level"/>
<feature type="chain" id="PRO_0000452988" description="Transcription factor sma-9">
    <location>
        <begin position="1"/>
        <end position="2242"/>
    </location>
</feature>
<feature type="zinc finger region" description="C2H2-type 1" evidence="2">
    <location>
        <begin position="1447"/>
        <end position="1469"/>
    </location>
</feature>
<feature type="zinc finger region" description="C2H2-type 2" evidence="2">
    <location>
        <begin position="1475"/>
        <end position="1499"/>
    </location>
</feature>
<feature type="zinc finger region" description="C2H2-type 3" evidence="2">
    <location>
        <begin position="1700"/>
        <end position="1722"/>
    </location>
</feature>
<feature type="zinc finger region" description="C2H2-type 4" evidence="2">
    <location>
        <begin position="1734"/>
        <end position="1760"/>
    </location>
</feature>
<feature type="zinc finger region" description="C2H2-type 5" evidence="2">
    <location>
        <begin position="1790"/>
        <end position="1814"/>
    </location>
</feature>
<feature type="zinc finger region" description="C2H2-type 6" evidence="2">
    <location>
        <begin position="2111"/>
        <end position="2134"/>
    </location>
</feature>
<feature type="zinc finger region" description="C2H2-type 7" evidence="2">
    <location>
        <begin position="2143"/>
        <end position="2167"/>
    </location>
</feature>
<feature type="region of interest" description="Disordered" evidence="3">
    <location>
        <begin position="317"/>
        <end position="344"/>
    </location>
</feature>
<feature type="region of interest" description="Disordered" evidence="3">
    <location>
        <begin position="494"/>
        <end position="553"/>
    </location>
</feature>
<feature type="region of interest" description="Disordered" evidence="3">
    <location>
        <begin position="583"/>
        <end position="617"/>
    </location>
</feature>
<feature type="region of interest" description="Disordered" evidence="3">
    <location>
        <begin position="712"/>
        <end position="754"/>
    </location>
</feature>
<feature type="region of interest" description="Disordered" evidence="3">
    <location>
        <begin position="1323"/>
        <end position="1349"/>
    </location>
</feature>
<feature type="region of interest" description="Disordered" evidence="3">
    <location>
        <begin position="2029"/>
        <end position="2059"/>
    </location>
</feature>
<feature type="region of interest" description="Disordered" evidence="3">
    <location>
        <begin position="2085"/>
        <end position="2107"/>
    </location>
</feature>
<feature type="region of interest" description="Disordered" evidence="3">
    <location>
        <begin position="2219"/>
        <end position="2242"/>
    </location>
</feature>
<feature type="coiled-coil region" evidence="1">
    <location>
        <begin position="120"/>
        <end position="383"/>
    </location>
</feature>
<feature type="compositionally biased region" description="Low complexity" evidence="3">
    <location>
        <begin position="317"/>
        <end position="330"/>
    </location>
</feature>
<feature type="compositionally biased region" description="Polar residues" evidence="3">
    <location>
        <begin position="331"/>
        <end position="344"/>
    </location>
</feature>
<feature type="compositionally biased region" description="Low complexity" evidence="3">
    <location>
        <begin position="494"/>
        <end position="523"/>
    </location>
</feature>
<feature type="compositionally biased region" description="Low complexity" evidence="3">
    <location>
        <begin position="539"/>
        <end position="550"/>
    </location>
</feature>
<feature type="compositionally biased region" description="Polar residues" evidence="3">
    <location>
        <begin position="583"/>
        <end position="601"/>
    </location>
</feature>
<feature type="compositionally biased region" description="Polar residues" evidence="3">
    <location>
        <begin position="1324"/>
        <end position="1338"/>
    </location>
</feature>
<feature type="compositionally biased region" description="Low complexity" evidence="3">
    <location>
        <begin position="2029"/>
        <end position="2039"/>
    </location>
</feature>
<feature type="compositionally biased region" description="Basic and acidic residues" evidence="3">
    <location>
        <begin position="2085"/>
        <end position="2099"/>
    </location>
</feature>
<feature type="compositionally biased region" description="Polar residues" evidence="3">
    <location>
        <begin position="2223"/>
        <end position="2242"/>
    </location>
</feature>
<feature type="splice variant" id="VSP_061081" description="In isoform h." evidence="12">
    <original>MSHQAIGISNNFQQVQREQLNHQRLLQAQLQTNGPGSVSQQQQASQQQQQVQHVQQQQQSQQQQQQVASQQNQPQLQMNAQILQALSTPQGQNLVNMLLMQQALNAQQTDTQNPQQIMQHQLAQQQAQQAQQAQQAQQARQQAEQQAQAQARHQAEQQAQQQAQQQAQARQQEQQAQLAAIQQQVTPQQFAQILHMQQQLQQQQFQQQQLQQQQLQQQQLQQQQLQQQQLQQQQLQQVLQISQAQQQAQQAQHVQSRQMQPSQQSQVQAQLQQQQQLQQQQAQQLSQQQAQQQQQLQQLQLQQFLQQQQQLHQQRAAAQQAQAQNNASQQRPSVASTPALSSTPQLNDLTQTMQAQLQQQLLLQQQQAQAQQAQQAQQAQLAQQAQQQQQGQSQNRTVSQALQYIQSMQLQQRADGTPNAESQEERLAQMLNEQQQRMLQNQAREAQHRQLLISSTPAPRGGITMGTPIGIARREEQPVPSTVAVTTAPAAVRTPVAVPPMKQNSNPSMNPSSTSTSASATSSHQILAPSLSKPLEQPSSSKAASSGNESMSDHISRIISENEVILQGDPVIRKKRPYHRQIGAQSSVDHDSNSGGSTRTSPGPKDSRMLQAASRSQSLFELSGSKHFMGSLTSGQPLLRPIQAHNDPNYTPECIYCKLTFPNEAGLQAHEVVCGKKKELEKAQIAQEGNPHSALKRRHTHQDATLAMHSPLAAHTPSNMPGPSEPAIKLKKDDSTELDGTSKPDALQSSSSFPRSLPKEWEQHMLTLQNLAAIIPPFVQAFLAKVLQTKLTMVSSGTLTHIYENYNISPICVKQFLHFASQLTDQQLEEMTVESEKQYLENAEEYQAKGIIQALPCDNLEVTEMLKQQETIMKGQVPDLLVSTQAVLHHCSGKRDNKDPSKNFVMIKLLHANGKDITEIPMKAETDLDECNARFVYQMREFQKINNMNDRLIEVLKTDPAAAATPLFQVAREQSASVKFLIRQTGMVHLTIVASVAKRLGMSSMQQDVPESNQIPNGIIAFDGVQIKQEPEDPPGDDDDDDDDCIIEVVDEDQKQHIAMLTAAASGQDIGIGGQFQKVTQNLEPAIVNQQSIVNHGDSIVNNASIPIANNAPVQIVQNGGPMQHEVVAMPVQLKLEDLRLEPQTSGDTDKPYWLVINGDIGGRPSFMTTAGMTSRTHRTRNITSETYVTVPRQQPMFAVQDGTLSMYAKWNVPVHNDAETKMNLSFMGMVSLRRRTGQQKFFKYTTANKDQGHYRMTHSSFWDISTKIRDRQASMSEEKTPEESVDYDAQFIERLVGGTYTNTDLQGPSNAPVTIPVLVAPEDSTSAEPSTSGQSLLMRSPRPQSPPLRDIKMDLSDDDYSATDLATTCKLEPKQESFEDVKDVKRENSPDARPTVIISDDAGRIRRERFANKYISRIRPKHDQIIGGHRTDEVYVYVRGRGRGRYICDRCGIRCKKPSMLKKHIKSHTD</original>
    <variation>MLKKHIKSHTD</variation>
    <location>
        <begin position="1"/>
        <end position="1471"/>
    </location>
</feature>
<feature type="splice variant" id="VSP_061082" description="In isoform c." evidence="12">
    <location>
        <begin position="1"/>
        <end position="550"/>
    </location>
</feature>
<feature type="splice variant" id="VSP_061083" description="In isoform m and isoform b." evidence="12">
    <original>MSHQAIGISNNFQ</original>
    <variation>MAFAPGSGGGGAPPGQQPAQMMMPQNISAETYHRLN</variation>
    <location>
        <begin position="1"/>
        <end position="13"/>
    </location>
</feature>
<feature type="splice variant" id="VSP_061084" description="In isoform a and isoform m." evidence="12">
    <location>
        <begin position="420"/>
        <end position="595"/>
    </location>
</feature>
<feature type="splice variant" id="VSP_061085" description="In isoform i, isoform b and isoform j." evidence="12">
    <location>
        <begin position="420"/>
        <end position="527"/>
    </location>
</feature>
<feature type="splice variant" id="VSP_061086" description="In isoform b." evidence="12">
    <original>QAFLAKVLQTKLTMVSSGTLTHIYENYNISP</original>
    <variation>SERLYRIHTKDKTPEIKLVSIFGSFYFLILK</variation>
    <location>
        <begin position="780"/>
        <end position="810"/>
    </location>
</feature>
<feature type="splice variant" id="VSP_061087" description="In isoform b." evidence="12">
    <location>
        <begin position="811"/>
        <end position="2242"/>
    </location>
</feature>
<feature type="splice variant" id="VSP_061088" description="In isoform j." evidence="12">
    <original>AM</original>
    <variation>GQ</variation>
    <location>
        <begin position="1616"/>
        <end position="1617"/>
    </location>
</feature>
<feature type="splice variant" id="VSP_061089" description="In isoform j." evidence="12">
    <location>
        <begin position="1618"/>
        <end position="2242"/>
    </location>
</feature>
<feature type="splice variant" id="VSP_061090" description="In isoform g and isoform i." evidence="12">
    <original>VSAVSASGSQSNVSCVSSFNNSTMSPNPTVVPQVFPTPNPSSPLESSSMQFRKKAVLDSATHANDMPRTILRISEIPSSLPVNHQLHRDLSFLAHTTSRSESSITSPIV</original>
    <variation>QLQQLHYVAQSNCGSTGVSNTKSVIPIGIVLNAVQKESSFGLGNTRERHAQNNSTNLGDSVQSTSQSSTCEIWVPYHICVFFKAITSLISANLKSHLINTLHLFSKFMI</variation>
    <location>
        <begin position="1927"/>
        <end position="2035"/>
    </location>
</feature>
<feature type="splice variant" id="VSP_061091" description="In isoform f." evidence="12">
    <location>
        <begin position="1927"/>
        <end position="2012"/>
    </location>
</feature>
<feature type="splice variant" id="VSP_061092" description="In isoform h." evidence="12">
    <original>VSAVSASGSQSNVSCVSSFNNSTMSPNPTVVPQVFPTPNPSSPLESSSMQFRKKAVLDSATHANDMPRTIL</original>
    <variation>QLQQLHYVAQSNCGSTGVSNTKSVIPIGIVLNAVQKESSFGLGNTRERHAQNNSTNLGDSVQSTSQSSTSS</variation>
    <location>
        <begin position="1927"/>
        <end position="1997"/>
    </location>
</feature>
<feature type="splice variant" id="VSP_061093" description="In isoform e and isoform m." evidence="12">
    <location>
        <begin position="1927"/>
        <end position="1959"/>
    </location>
</feature>
<feature type="splice variant" id="VSP_061094" description="In isoform h." evidence="12">
    <location>
        <begin position="1998"/>
        <end position="2242"/>
    </location>
</feature>
<feature type="splice variant" id="VSP_061095" description="In isoform g and isoform i." evidence="12">
    <location>
        <begin position="2036"/>
        <end position="2242"/>
    </location>
</feature>
<feature type="mutagenesis site" description="In cc606; lacks postembryonic mesodermal lineage (M lineage) derived coelomocytes (CCs)." evidence="5">
    <location>
        <begin position="55"/>
        <end position="2242"/>
    </location>
</feature>
<feature type="mutagenesis site" description="In wk55; in larval L1 through L3 stages, shows a reduced growth rate, and after L3, growth rate increases to a wild-type rate and finally gives the adult animals an intermediate body length. Male-specific genital sensilla (simple sense organs), known as rays, fuse abnormally." evidence="4">
    <location>
        <begin position="1235"/>
        <end position="2242"/>
    </location>
</feature>
<feature type="mutagenesis site" description="In cc604; lacks postembryonic mesodermal lineage (M lineage) derived coelomocytes (CCs). Exhibits loss of dorsal, and duplication of ventral, postembryonic mesodermal lineage (M lineage) descendants. On lin-12 or lag-1 mutant backgrounds, dorsoventral polarity of the M lineage is reversed. Transcription factor unc-130 ectopically expressed in all M lineage cells from the 1-M stage through to the 18-M stage, whereas in wild-type only expressed in ventral M lineage starting from the 8-M stage." evidence="5 7 11">
    <location>
        <begin position="2226"/>
        <end position="2242"/>
    </location>
</feature>
<evidence type="ECO:0000255" key="1"/>
<evidence type="ECO:0000255" key="2">
    <source>
        <dbReference type="PROSITE-ProRule" id="PRU00042"/>
    </source>
</evidence>
<evidence type="ECO:0000256" key="3">
    <source>
        <dbReference type="SAM" id="MobiDB-lite"/>
    </source>
</evidence>
<evidence type="ECO:0000269" key="4">
    <source>
    </source>
</evidence>
<evidence type="ECO:0000269" key="5">
    <source>
    </source>
</evidence>
<evidence type="ECO:0000269" key="6">
    <source>
    </source>
</evidence>
<evidence type="ECO:0000269" key="7">
    <source>
    </source>
</evidence>
<evidence type="ECO:0000269" key="8">
    <source>
    </source>
</evidence>
<evidence type="ECO:0000269" key="9">
    <source>
    </source>
</evidence>
<evidence type="ECO:0000269" key="10">
    <source>
    </source>
</evidence>
<evidence type="ECO:0000269" key="11">
    <source>
    </source>
</evidence>
<evidence type="ECO:0000305" key="12"/>
<evidence type="ECO:0000312" key="13">
    <source>
        <dbReference type="EMBL" id="AAQ94962.1"/>
    </source>
</evidence>
<evidence type="ECO:0000312" key="14">
    <source>
        <dbReference type="Proteomes" id="UP000001940"/>
    </source>
</evidence>
<evidence type="ECO:0000312" key="15">
    <source>
        <dbReference type="WormBase" id="T05A10.1a"/>
    </source>
</evidence>
<evidence type="ECO:0000312" key="16">
    <source>
        <dbReference type="WormBase" id="T05A10.1b"/>
    </source>
</evidence>
<evidence type="ECO:0000312" key="17">
    <source>
        <dbReference type="WormBase" id="T05A10.1c"/>
    </source>
</evidence>
<evidence type="ECO:0000312" key="18">
    <source>
        <dbReference type="WormBase" id="T05A10.1d"/>
    </source>
</evidence>
<evidence type="ECO:0000312" key="19">
    <source>
        <dbReference type="WormBase" id="T05A10.1e"/>
    </source>
</evidence>
<evidence type="ECO:0000312" key="20">
    <source>
        <dbReference type="WormBase" id="T05A10.1f"/>
    </source>
</evidence>
<evidence type="ECO:0000312" key="21">
    <source>
        <dbReference type="WormBase" id="T05A10.1g"/>
    </source>
</evidence>
<evidence type="ECO:0000312" key="22">
    <source>
        <dbReference type="WormBase" id="T05A10.1h"/>
    </source>
</evidence>
<evidence type="ECO:0000312" key="23">
    <source>
        <dbReference type="WormBase" id="T05A10.1i"/>
    </source>
</evidence>
<evidence type="ECO:0000312" key="24">
    <source>
        <dbReference type="WormBase" id="T05A10.1j"/>
    </source>
</evidence>
<evidence type="ECO:0000312" key="25">
    <source>
        <dbReference type="WormBase" id="T05A10.1m"/>
    </source>
</evidence>
<dbReference type="EMBL" id="AY390550">
    <property type="protein sequence ID" value="AAQ94962.1"/>
    <property type="molecule type" value="mRNA"/>
</dbReference>
<dbReference type="EMBL" id="BX284606">
    <property type="protein sequence ID" value="CAA92133.3"/>
    <property type="molecule type" value="Genomic_DNA"/>
</dbReference>
<dbReference type="EMBL" id="BX284606">
    <property type="protein sequence ID" value="CAD44152.2"/>
    <property type="molecule type" value="Genomic_DNA"/>
</dbReference>
<dbReference type="EMBL" id="BX284606">
    <property type="protein sequence ID" value="CAF31486.1"/>
    <property type="molecule type" value="Genomic_DNA"/>
</dbReference>
<dbReference type="EMBL" id="BX284606">
    <property type="protein sequence ID" value="CAF31487.1"/>
    <property type="molecule type" value="Genomic_DNA"/>
</dbReference>
<dbReference type="EMBL" id="BX284606">
    <property type="protein sequence ID" value="CAF31490.2"/>
    <property type="molecule type" value="Genomic_DNA"/>
</dbReference>
<dbReference type="EMBL" id="BX284606">
    <property type="protein sequence ID" value="CAF31491.2"/>
    <property type="molecule type" value="Genomic_DNA"/>
</dbReference>
<dbReference type="EMBL" id="BX284606">
    <property type="protein sequence ID" value="CAF31492.2"/>
    <property type="molecule type" value="Genomic_DNA"/>
</dbReference>
<dbReference type="EMBL" id="BX284606">
    <property type="protein sequence ID" value="CAF31493.2"/>
    <property type="molecule type" value="Genomic_DNA"/>
</dbReference>
<dbReference type="EMBL" id="BX284606">
    <property type="protein sequence ID" value="CAR64679.2"/>
    <property type="molecule type" value="Genomic_DNA"/>
</dbReference>
<dbReference type="EMBL" id="BX284606">
    <property type="protein sequence ID" value="CEN20182.1"/>
    <property type="molecule type" value="Genomic_DNA"/>
</dbReference>
<dbReference type="EMBL" id="BX284606">
    <property type="protein sequence ID" value="CEN20183.1"/>
    <property type="molecule type" value="Genomic_DNA"/>
</dbReference>
<dbReference type="PIR" id="T24490">
    <property type="entry name" value="T24490"/>
</dbReference>
<dbReference type="RefSeq" id="NP_001024877.1">
    <property type="nucleotide sequence ID" value="NM_001029706.4"/>
</dbReference>
<dbReference type="RefSeq" id="NP_001024878.1">
    <property type="nucleotide sequence ID" value="NM_001029707.5"/>
</dbReference>
<dbReference type="RefSeq" id="NP_001024879.1">
    <property type="nucleotide sequence ID" value="NM_001029708.2"/>
</dbReference>
<dbReference type="RefSeq" id="NP_001024880.1">
    <property type="nucleotide sequence ID" value="NM_001029709.1"/>
</dbReference>
<dbReference type="RefSeq" id="NP_001024881.1">
    <property type="nucleotide sequence ID" value="NM_001029710.3"/>
</dbReference>
<dbReference type="RefSeq" id="NP_001024882.1">
    <property type="nucleotide sequence ID" value="NM_001029711.3"/>
</dbReference>
<dbReference type="RefSeq" id="NP_001024883.1">
    <property type="nucleotide sequence ID" value="NM_001029712.2"/>
</dbReference>
<dbReference type="RefSeq" id="NP_001024884.1">
    <property type="nucleotide sequence ID" value="NM_001029713.3"/>
</dbReference>
<dbReference type="RefSeq" id="NP_001129936.1">
    <property type="nucleotide sequence ID" value="NM_001136464.2"/>
</dbReference>
<dbReference type="RefSeq" id="NP_001361884.1">
    <molecule id="Q7JM44-11"/>
    <property type="nucleotide sequence ID" value="NM_001375125.3"/>
</dbReference>
<dbReference type="RefSeq" id="NP_001361885.1">
    <molecule id="Q7JM44-3"/>
    <property type="nucleotide sequence ID" value="NM_001375124.1"/>
</dbReference>
<dbReference type="RefSeq" id="NP_001361886.1">
    <molecule id="Q7JM44-7"/>
    <property type="nucleotide sequence ID" value="NM_001375123.1"/>
</dbReference>
<dbReference type="RefSeq" id="NP_001361887.1">
    <molecule id="Q7JM44-1"/>
    <property type="nucleotide sequence ID" value="NM_001375120.2"/>
</dbReference>
<dbReference type="RefSeq" id="NP_001361888.1">
    <molecule id="Q7JM44-2"/>
    <property type="nucleotide sequence ID" value="NM_001375121.3"/>
</dbReference>
<dbReference type="RefSeq" id="NP_001361889.1">
    <molecule id="Q7JM44-6"/>
    <property type="nucleotide sequence ID" value="NM_001375122.2"/>
</dbReference>
<dbReference type="RefSeq" id="NP_001361905.1">
    <molecule id="Q7JM44-5"/>
    <property type="nucleotide sequence ID" value="NM_001375119.3"/>
</dbReference>
<dbReference type="RefSeq" id="NP_001364627.1">
    <molecule id="Q7JM44-10"/>
    <property type="nucleotide sequence ID" value="NM_001377619.1"/>
</dbReference>
<dbReference type="RefSeq" id="NP_001364832.1">
    <molecule id="Q7JM44-8"/>
    <property type="nucleotide sequence ID" value="NM_001377620.1"/>
</dbReference>
<dbReference type="RefSeq" id="NP_001380177.1">
    <molecule id="Q7JM44-9"/>
    <property type="nucleotide sequence ID" value="NM_001392838.1"/>
</dbReference>
<dbReference type="RefSeq" id="NP_741896.2">
    <molecule id="Q7JM44-4"/>
    <property type="nucleotide sequence ID" value="NM_171771.6"/>
</dbReference>
<dbReference type="RefSeq" id="NP_741897.2">
    <property type="nucleotide sequence ID" value="NM_171772.3"/>
</dbReference>
<dbReference type="SMR" id="Q7JM44"/>
<dbReference type="DIP" id="DIP-25468N"/>
<dbReference type="FunCoup" id="Q7JM44">
    <property type="interactions" value="362"/>
</dbReference>
<dbReference type="IntAct" id="Q7JM44">
    <property type="interactions" value="38"/>
</dbReference>
<dbReference type="STRING" id="6239.T05A10.1m.1"/>
<dbReference type="PaxDb" id="6239-T05A10.1m"/>
<dbReference type="EnsemblMetazoa" id="T05A10.1a.1">
    <molecule id="Q7JM44-4"/>
    <property type="protein sequence ID" value="T05A10.1a.1"/>
    <property type="gene ID" value="WBGene00004862"/>
</dbReference>
<dbReference type="EnsemblMetazoa" id="T05A10.1b.1">
    <molecule id="Q7JM44-10"/>
    <property type="protein sequence ID" value="T05A10.1b.1"/>
    <property type="gene ID" value="WBGene00004862"/>
</dbReference>
<dbReference type="EnsemblMetazoa" id="T05A10.1c.1">
    <molecule id="Q7JM44-3"/>
    <property type="protein sequence ID" value="T05A10.1c.1"/>
    <property type="gene ID" value="WBGene00004862"/>
</dbReference>
<dbReference type="EnsemblMetazoa" id="T05A10.1c.2">
    <molecule id="Q7JM44-3"/>
    <property type="protein sequence ID" value="T05A10.1c.2"/>
    <property type="gene ID" value="WBGene00004862"/>
</dbReference>
<dbReference type="EnsemblMetazoa" id="T05A10.1d.1">
    <molecule id="Q7JM44-1"/>
    <property type="protein sequence ID" value="T05A10.1d.1"/>
    <property type="gene ID" value="WBGene00004862"/>
</dbReference>
<dbReference type="EnsemblMetazoa" id="T05A10.1e.1">
    <molecule id="Q7JM44-2"/>
    <property type="protein sequence ID" value="T05A10.1e.1"/>
    <property type="gene ID" value="WBGene00004862"/>
</dbReference>
<dbReference type="EnsemblMetazoa" id="T05A10.1f.1">
    <molecule id="Q7JM44-6"/>
    <property type="protein sequence ID" value="T05A10.1f.1"/>
    <property type="gene ID" value="WBGene00004862"/>
</dbReference>
<dbReference type="EnsemblMetazoa" id="T05A10.1g.1">
    <molecule id="Q7JM44-7"/>
    <property type="protein sequence ID" value="T05A10.1g.1"/>
    <property type="gene ID" value="WBGene00004862"/>
</dbReference>
<dbReference type="EnsemblMetazoa" id="T05A10.1h.1">
    <molecule id="Q7JM44-11"/>
    <property type="protein sequence ID" value="T05A10.1h.1"/>
    <property type="gene ID" value="WBGene00004862"/>
</dbReference>
<dbReference type="EnsemblMetazoa" id="T05A10.1h.2">
    <molecule id="Q7JM44-11"/>
    <property type="protein sequence ID" value="T05A10.1h.2"/>
    <property type="gene ID" value="WBGene00004862"/>
</dbReference>
<dbReference type="EnsemblMetazoa" id="T05A10.1i.1">
    <molecule id="Q7JM44-8"/>
    <property type="protein sequence ID" value="T05A10.1i.1"/>
    <property type="gene ID" value="WBGene00004862"/>
</dbReference>
<dbReference type="EnsemblMetazoa" id="T05A10.1j.1">
    <molecule id="Q7JM44-9"/>
    <property type="protein sequence ID" value="T05A10.1j.1"/>
    <property type="gene ID" value="WBGene00004862"/>
</dbReference>
<dbReference type="EnsemblMetazoa" id="T05A10.1j.2">
    <molecule id="Q7JM44-9"/>
    <property type="protein sequence ID" value="T05A10.1j.2"/>
    <property type="gene ID" value="WBGene00004862"/>
</dbReference>
<dbReference type="EnsemblMetazoa" id="T05A10.1j.3">
    <molecule id="Q7JM44-9"/>
    <property type="protein sequence ID" value="T05A10.1j.3"/>
    <property type="gene ID" value="WBGene00004862"/>
</dbReference>
<dbReference type="EnsemblMetazoa" id="T05A10.1j.4">
    <molecule id="Q7JM44-9"/>
    <property type="protein sequence ID" value="T05A10.1j.4"/>
    <property type="gene ID" value="WBGene00004862"/>
</dbReference>
<dbReference type="EnsemblMetazoa" id="T05A10.1m.1">
    <molecule id="Q7JM44-5"/>
    <property type="protein sequence ID" value="T05A10.1m.1"/>
    <property type="gene ID" value="WBGene00004862"/>
</dbReference>
<dbReference type="GeneID" id="181271"/>
<dbReference type="KEGG" id="cel:CELE_T05A10.1"/>
<dbReference type="AGR" id="WB:WBGene00004862"/>
<dbReference type="CTD" id="181271"/>
<dbReference type="WormBase" id="T05A10.1a">
    <molecule id="Q7JM44-4"/>
    <property type="protein sequence ID" value="CE36395"/>
    <property type="gene ID" value="WBGene00004862"/>
    <property type="gene designation" value="sma-9"/>
</dbReference>
<dbReference type="WormBase" id="T05A10.1b">
    <molecule id="Q7JM44-10"/>
    <property type="protein sequence ID" value="CE36396"/>
    <property type="gene ID" value="WBGene00004862"/>
    <property type="gene designation" value="sma-9"/>
</dbReference>
<dbReference type="WormBase" id="T05A10.1c">
    <molecule id="Q7JM44-3"/>
    <property type="protein sequence ID" value="CE36397"/>
    <property type="gene ID" value="WBGene00004862"/>
    <property type="gene designation" value="sma-9"/>
</dbReference>
<dbReference type="WormBase" id="T05A10.1d">
    <molecule id="Q7JM44-1"/>
    <property type="protein sequence ID" value="CE53674"/>
    <property type="gene ID" value="WBGene00004862"/>
    <property type="gene designation" value="sma-9"/>
</dbReference>
<dbReference type="WormBase" id="T05A10.1e">
    <molecule id="Q7JM44-2"/>
    <property type="protein sequence ID" value="CE53502"/>
    <property type="gene ID" value="WBGene00004862"/>
    <property type="gene designation" value="sma-9"/>
</dbReference>
<dbReference type="WormBase" id="T05A10.1f">
    <molecule id="Q7JM44-6"/>
    <property type="protein sequence ID" value="CE53550"/>
    <property type="gene ID" value="WBGene00004862"/>
    <property type="gene designation" value="sma-9"/>
</dbReference>
<dbReference type="WormBase" id="T05A10.1g">
    <molecule id="Q7JM44-7"/>
    <property type="protein sequence ID" value="CE53588"/>
    <property type="gene ID" value="WBGene00004862"/>
    <property type="gene designation" value="sma-9"/>
</dbReference>
<dbReference type="WormBase" id="T05A10.1h">
    <molecule id="Q7JM44-11"/>
    <property type="protein sequence ID" value="CE36402"/>
    <property type="gene ID" value="WBGene00004862"/>
    <property type="gene designation" value="sma-9"/>
</dbReference>
<dbReference type="WormBase" id="T05A10.1i">
    <molecule id="Q7JM44-8"/>
    <property type="protein sequence ID" value="CE36403"/>
    <property type="gene ID" value="WBGene00004862"/>
    <property type="gene designation" value="sma-9"/>
</dbReference>
<dbReference type="WormBase" id="T05A10.1j">
    <molecule id="Q7JM44-9"/>
    <property type="protein sequence ID" value="CE36404"/>
    <property type="gene ID" value="WBGene00004862"/>
    <property type="gene designation" value="sma-9"/>
</dbReference>
<dbReference type="WormBase" id="T05A10.1m">
    <molecule id="Q7JM44-5"/>
    <property type="protein sequence ID" value="CE53497"/>
    <property type="gene ID" value="WBGene00004862"/>
    <property type="gene designation" value="sma-9"/>
</dbReference>
<dbReference type="eggNOG" id="KOG1721">
    <property type="taxonomic scope" value="Eukaryota"/>
</dbReference>
<dbReference type="HOGENOM" id="CLU_507387_0_0_1"/>
<dbReference type="InParanoid" id="Q7JM44"/>
<dbReference type="OrthoDB" id="10042249at2759"/>
<dbReference type="SignaLink" id="Q7JM44"/>
<dbReference type="PRO" id="PR:Q7JM44"/>
<dbReference type="Proteomes" id="UP000001940">
    <property type="component" value="Chromosome X"/>
</dbReference>
<dbReference type="Bgee" id="WBGene00004862">
    <property type="expression patterns" value="Expressed in pharyngeal muscle cell (C elegans) and 4 other cell types or tissues"/>
</dbReference>
<dbReference type="ExpressionAtlas" id="Q7JM44">
    <property type="expression patterns" value="baseline and differential"/>
</dbReference>
<dbReference type="GO" id="GO:0005634">
    <property type="term" value="C:nucleus"/>
    <property type="evidence" value="ECO:0000314"/>
    <property type="project" value="UniProtKB"/>
</dbReference>
<dbReference type="GO" id="GO:0000981">
    <property type="term" value="F:DNA-binding transcription factor activity, RNA polymerase II-specific"/>
    <property type="evidence" value="ECO:0000318"/>
    <property type="project" value="GO_Central"/>
</dbReference>
<dbReference type="GO" id="GO:0000978">
    <property type="term" value="F:RNA polymerase II cis-regulatory region sequence-specific DNA binding"/>
    <property type="evidence" value="ECO:0000318"/>
    <property type="project" value="GO_Central"/>
</dbReference>
<dbReference type="GO" id="GO:0003713">
    <property type="term" value="F:transcription coactivator activity"/>
    <property type="evidence" value="ECO:0000315"/>
    <property type="project" value="WormBase"/>
</dbReference>
<dbReference type="GO" id="GO:0003714">
    <property type="term" value="F:transcription corepressor activity"/>
    <property type="evidence" value="ECO:0000315"/>
    <property type="project" value="WormBase"/>
</dbReference>
<dbReference type="GO" id="GO:0008270">
    <property type="term" value="F:zinc ion binding"/>
    <property type="evidence" value="ECO:0007669"/>
    <property type="project" value="UniProtKB-KW"/>
</dbReference>
<dbReference type="GO" id="GO:0034605">
    <property type="term" value="P:cellular response to heat"/>
    <property type="evidence" value="ECO:0000315"/>
    <property type="project" value="UniProtKB"/>
</dbReference>
<dbReference type="GO" id="GO:0008340">
    <property type="term" value="P:determination of adult lifespan"/>
    <property type="evidence" value="ECO:0000315"/>
    <property type="project" value="UniProtKB"/>
</dbReference>
<dbReference type="GO" id="GO:0030514">
    <property type="term" value="P:negative regulation of BMP signaling pathway"/>
    <property type="evidence" value="ECO:0000315"/>
    <property type="project" value="UniProtKB"/>
</dbReference>
<dbReference type="GO" id="GO:0010629">
    <property type="term" value="P:negative regulation of gene expression"/>
    <property type="evidence" value="ECO:0000315"/>
    <property type="project" value="UniProtKB"/>
</dbReference>
<dbReference type="GO" id="GO:0090597">
    <property type="term" value="P:nematode male tail mating organ morphogenesis"/>
    <property type="evidence" value="ECO:0000315"/>
    <property type="project" value="UniProtKB"/>
</dbReference>
<dbReference type="GO" id="GO:0045138">
    <property type="term" value="P:nematode male tail tip morphogenesis"/>
    <property type="evidence" value="ECO:0000315"/>
    <property type="project" value="WormBase"/>
</dbReference>
<dbReference type="GO" id="GO:0010628">
    <property type="term" value="P:positive regulation of gene expression"/>
    <property type="evidence" value="ECO:0000315"/>
    <property type="project" value="UniProtKB"/>
</dbReference>
<dbReference type="GO" id="GO:0048337">
    <property type="term" value="P:positive regulation of mesodermal cell fate specification"/>
    <property type="evidence" value="ECO:0000315"/>
    <property type="project" value="UniProtKB"/>
</dbReference>
<dbReference type="GO" id="GO:0040018">
    <property type="term" value="P:positive regulation of multicellular organism growth"/>
    <property type="evidence" value="ECO:0000315"/>
    <property type="project" value="WormBase"/>
</dbReference>
<dbReference type="GO" id="GO:1900182">
    <property type="term" value="P:positive regulation of protein localization to nucleus"/>
    <property type="evidence" value="ECO:0000315"/>
    <property type="project" value="UniProtKB"/>
</dbReference>
<dbReference type="GO" id="GO:0042661">
    <property type="term" value="P:regulation of mesodermal cell fate specification"/>
    <property type="evidence" value="ECO:0000315"/>
    <property type="project" value="UniProtKB"/>
</dbReference>
<dbReference type="GO" id="GO:0006357">
    <property type="term" value="P:regulation of transcription by RNA polymerase II"/>
    <property type="evidence" value="ECO:0000318"/>
    <property type="project" value="GO_Central"/>
</dbReference>
<dbReference type="GO" id="GO:0007179">
    <property type="term" value="P:transforming growth factor beta receptor signaling pathway"/>
    <property type="evidence" value="ECO:0000316"/>
    <property type="project" value="WormBase"/>
</dbReference>
<dbReference type="FunFam" id="3.30.160.60:FF:004725">
    <property type="match status" value="1"/>
</dbReference>
<dbReference type="FunFam" id="3.30.160.60:FF:002903">
    <property type="entry name" value="Protein CBR-SMA-9"/>
    <property type="match status" value="1"/>
</dbReference>
<dbReference type="FunFam" id="3.30.160.60:FF:000594">
    <property type="entry name" value="Transcription factor HIVEP2"/>
    <property type="match status" value="1"/>
</dbReference>
<dbReference type="Gene3D" id="3.30.160.60">
    <property type="entry name" value="Classic Zinc Finger"/>
    <property type="match status" value="3"/>
</dbReference>
<dbReference type="InterPro" id="IPR003604">
    <property type="entry name" value="Matrin/U1-like-C_Znf_C2H2"/>
</dbReference>
<dbReference type="InterPro" id="IPR051969">
    <property type="entry name" value="Zinc-finger_DNA-bd_regulators"/>
</dbReference>
<dbReference type="InterPro" id="IPR036236">
    <property type="entry name" value="Znf_C2H2_sf"/>
</dbReference>
<dbReference type="InterPro" id="IPR013087">
    <property type="entry name" value="Znf_C2H2_type"/>
</dbReference>
<dbReference type="PANTHER" id="PTHR45944">
    <property type="entry name" value="SCHNURRI, ISOFORM F"/>
    <property type="match status" value="1"/>
</dbReference>
<dbReference type="PANTHER" id="PTHR45944:SF2">
    <property type="entry name" value="SCHNURRI, ISOFORM F"/>
    <property type="match status" value="1"/>
</dbReference>
<dbReference type="Pfam" id="PF00096">
    <property type="entry name" value="zf-C2H2"/>
    <property type="match status" value="2"/>
</dbReference>
<dbReference type="Pfam" id="PF12874">
    <property type="entry name" value="zf-met"/>
    <property type="match status" value="1"/>
</dbReference>
<dbReference type="SMART" id="SM00355">
    <property type="entry name" value="ZnF_C2H2"/>
    <property type="match status" value="8"/>
</dbReference>
<dbReference type="SMART" id="SM00451">
    <property type="entry name" value="ZnF_U1"/>
    <property type="match status" value="2"/>
</dbReference>
<dbReference type="SUPFAM" id="SSF57667">
    <property type="entry name" value="beta-beta-alpha zinc fingers"/>
    <property type="match status" value="3"/>
</dbReference>
<dbReference type="PROSITE" id="PS00028">
    <property type="entry name" value="ZINC_FINGER_C2H2_1"/>
    <property type="match status" value="7"/>
</dbReference>
<dbReference type="PROSITE" id="PS50157">
    <property type="entry name" value="ZINC_FINGER_C2H2_2"/>
    <property type="match status" value="5"/>
</dbReference>
<organism evidence="14">
    <name type="scientific">Caenorhabditis elegans</name>
    <dbReference type="NCBI Taxonomy" id="6239"/>
    <lineage>
        <taxon>Eukaryota</taxon>
        <taxon>Metazoa</taxon>
        <taxon>Ecdysozoa</taxon>
        <taxon>Nematoda</taxon>
        <taxon>Chromadorea</taxon>
        <taxon>Rhabditida</taxon>
        <taxon>Rhabditina</taxon>
        <taxon>Rhabditomorpha</taxon>
        <taxon>Rhabditoidea</taxon>
        <taxon>Rhabditidae</taxon>
        <taxon>Peloderinae</taxon>
        <taxon>Caenorhabditis</taxon>
    </lineage>
</organism>
<keyword id="KW-0010">Activator</keyword>
<keyword id="KW-0025">Alternative splicing</keyword>
<keyword id="KW-0175">Coiled coil</keyword>
<keyword id="KW-0479">Metal-binding</keyword>
<keyword id="KW-0539">Nucleus</keyword>
<keyword id="KW-1185">Reference proteome</keyword>
<keyword id="KW-0677">Repeat</keyword>
<keyword id="KW-0678">Repressor</keyword>
<keyword id="KW-0804">Transcription</keyword>
<keyword id="KW-0805">Transcription regulation</keyword>
<keyword id="KW-0862">Zinc</keyword>
<keyword id="KW-0863">Zinc-finger</keyword>